<keyword id="KW-0997">Cell inner membrane</keyword>
<keyword id="KW-1003">Cell membrane</keyword>
<keyword id="KW-0472">Membrane</keyword>
<keyword id="KW-0812">Transmembrane</keyword>
<keyword id="KW-1133">Transmembrane helix</keyword>
<name>YCIB_SHESW</name>
<dbReference type="EMBL" id="CP000503">
    <property type="protein sequence ID" value="ABM24429.1"/>
    <property type="molecule type" value="Genomic_DNA"/>
</dbReference>
<dbReference type="RefSeq" id="WP_011788929.1">
    <property type="nucleotide sequence ID" value="NC_008750.1"/>
</dbReference>
<dbReference type="KEGG" id="shw:Sputw3181_1592"/>
<dbReference type="HOGENOM" id="CLU_089554_2_0_6"/>
<dbReference type="Proteomes" id="UP000002597">
    <property type="component" value="Chromosome"/>
</dbReference>
<dbReference type="GO" id="GO:0005886">
    <property type="term" value="C:plasma membrane"/>
    <property type="evidence" value="ECO:0007669"/>
    <property type="project" value="UniProtKB-SubCell"/>
</dbReference>
<dbReference type="HAMAP" id="MF_00189">
    <property type="entry name" value="YciB"/>
    <property type="match status" value="1"/>
</dbReference>
<dbReference type="InterPro" id="IPR006008">
    <property type="entry name" value="YciB"/>
</dbReference>
<dbReference type="NCBIfam" id="TIGR00997">
    <property type="entry name" value="ispZ"/>
    <property type="match status" value="1"/>
</dbReference>
<dbReference type="NCBIfam" id="NF001324">
    <property type="entry name" value="PRK00259.1-2"/>
    <property type="match status" value="1"/>
</dbReference>
<dbReference type="NCBIfam" id="NF001325">
    <property type="entry name" value="PRK00259.1-3"/>
    <property type="match status" value="1"/>
</dbReference>
<dbReference type="PANTHER" id="PTHR36917:SF1">
    <property type="entry name" value="INNER MEMBRANE-SPANNING PROTEIN YCIB"/>
    <property type="match status" value="1"/>
</dbReference>
<dbReference type="PANTHER" id="PTHR36917">
    <property type="entry name" value="INTRACELLULAR SEPTATION PROTEIN A-RELATED"/>
    <property type="match status" value="1"/>
</dbReference>
<dbReference type="Pfam" id="PF04279">
    <property type="entry name" value="IspA"/>
    <property type="match status" value="1"/>
</dbReference>
<gene>
    <name evidence="1" type="primary">yciB</name>
    <name type="ordered locus">Sputw3181_1592</name>
</gene>
<proteinExistence type="inferred from homology"/>
<comment type="function">
    <text evidence="1">Plays a role in cell envelope biogenesis, maintenance of cell envelope integrity and membrane homeostasis.</text>
</comment>
<comment type="subcellular location">
    <subcellularLocation>
        <location evidence="1">Cell inner membrane</location>
        <topology evidence="1">Multi-pass membrane protein</topology>
    </subcellularLocation>
</comment>
<comment type="similarity">
    <text evidence="1">Belongs to the YciB family.</text>
</comment>
<reference key="1">
    <citation type="submission" date="2006-12" db="EMBL/GenBank/DDBJ databases">
        <title>Complete sequence of Shewanella sp. W3-18-1.</title>
        <authorList>
            <consortium name="US DOE Joint Genome Institute"/>
            <person name="Copeland A."/>
            <person name="Lucas S."/>
            <person name="Lapidus A."/>
            <person name="Barry K."/>
            <person name="Detter J.C."/>
            <person name="Glavina del Rio T."/>
            <person name="Hammon N."/>
            <person name="Israni S."/>
            <person name="Dalin E."/>
            <person name="Tice H."/>
            <person name="Pitluck S."/>
            <person name="Chain P."/>
            <person name="Malfatti S."/>
            <person name="Shin M."/>
            <person name="Vergez L."/>
            <person name="Schmutz J."/>
            <person name="Larimer F."/>
            <person name="Land M."/>
            <person name="Hauser L."/>
            <person name="Kyrpides N."/>
            <person name="Lykidis A."/>
            <person name="Tiedje J."/>
            <person name="Richardson P."/>
        </authorList>
    </citation>
    <scope>NUCLEOTIDE SEQUENCE [LARGE SCALE GENOMIC DNA]</scope>
    <source>
        <strain>W3-18-1</strain>
    </source>
</reference>
<protein>
    <recommendedName>
        <fullName evidence="1">Inner membrane-spanning protein YciB</fullName>
    </recommendedName>
</protein>
<organism>
    <name type="scientific">Shewanella sp. (strain W3-18-1)</name>
    <dbReference type="NCBI Taxonomy" id="351745"/>
    <lineage>
        <taxon>Bacteria</taxon>
        <taxon>Pseudomonadati</taxon>
        <taxon>Pseudomonadota</taxon>
        <taxon>Gammaproteobacteria</taxon>
        <taxon>Alteromonadales</taxon>
        <taxon>Shewanellaceae</taxon>
        <taxon>Shewanella</taxon>
    </lineage>
</organism>
<accession>A1RID4</accession>
<evidence type="ECO:0000255" key="1">
    <source>
        <dbReference type="HAMAP-Rule" id="MF_00189"/>
    </source>
</evidence>
<sequence>MKQLLDFLPLVIFFAVYKFFDIYIASGALIAATALQLIVTYALYKKLEKMHLITFAMVTVFGTLTLVFHDDAFIKWKVTIIYALFALALGISQLLNKSILKSMLGKEMQVADKIWAHITWYWVIFFATCGLVNIYVAFSLPLETWVNFKVFGLTALTLVNTVITVFYLYKHLPEDQRKELK</sequence>
<feature type="chain" id="PRO_1000021063" description="Inner membrane-spanning protein YciB">
    <location>
        <begin position="1"/>
        <end position="181"/>
    </location>
</feature>
<feature type="transmembrane region" description="Helical" evidence="1">
    <location>
        <begin position="10"/>
        <end position="30"/>
    </location>
</feature>
<feature type="transmembrane region" description="Helical" evidence="1">
    <location>
        <begin position="50"/>
        <end position="70"/>
    </location>
</feature>
<feature type="transmembrane region" description="Helical" evidence="1">
    <location>
        <begin position="72"/>
        <end position="92"/>
    </location>
</feature>
<feature type="transmembrane region" description="Helical" evidence="1">
    <location>
        <begin position="118"/>
        <end position="138"/>
    </location>
</feature>
<feature type="transmembrane region" description="Helical" evidence="1">
    <location>
        <begin position="148"/>
        <end position="168"/>
    </location>
</feature>